<reference key="1">
    <citation type="journal article" date="1999" name="DNA Res.">
        <title>Complete structure of the chloroplast genome of Arabidopsis thaliana.</title>
        <authorList>
            <person name="Sato S."/>
            <person name="Nakamura Y."/>
            <person name="Kaneko T."/>
            <person name="Asamizu E."/>
            <person name="Tabata S."/>
        </authorList>
    </citation>
    <scope>NUCLEOTIDE SEQUENCE [LARGE SCALE GENOMIC DNA]</scope>
    <source>
        <strain>cv. Columbia</strain>
    </source>
</reference>
<name>NDHJ_ARATH</name>
<keyword id="KW-0002">3D-structure</keyword>
<keyword id="KW-0150">Chloroplast</keyword>
<keyword id="KW-0472">Membrane</keyword>
<keyword id="KW-0520">NAD</keyword>
<keyword id="KW-0521">NADP</keyword>
<keyword id="KW-0934">Plastid</keyword>
<keyword id="KW-0618">Plastoquinone</keyword>
<keyword id="KW-0874">Quinone</keyword>
<keyword id="KW-1185">Reference proteome</keyword>
<keyword id="KW-0793">Thylakoid</keyword>
<keyword id="KW-1278">Translocase</keyword>
<keyword id="KW-0813">Transport</keyword>
<feature type="chain" id="PRO_0000118652" description="NAD(P)H-quinone oxidoreductase subunit J, chloroplastic">
    <location>
        <begin position="1"/>
        <end position="158"/>
    </location>
</feature>
<geneLocation type="chloroplast"/>
<evidence type="ECO:0000255" key="1">
    <source>
        <dbReference type="HAMAP-Rule" id="MF_01357"/>
    </source>
</evidence>
<organism>
    <name type="scientific">Arabidopsis thaliana</name>
    <name type="common">Mouse-ear cress</name>
    <dbReference type="NCBI Taxonomy" id="3702"/>
    <lineage>
        <taxon>Eukaryota</taxon>
        <taxon>Viridiplantae</taxon>
        <taxon>Streptophyta</taxon>
        <taxon>Embryophyta</taxon>
        <taxon>Tracheophyta</taxon>
        <taxon>Spermatophyta</taxon>
        <taxon>Magnoliopsida</taxon>
        <taxon>eudicotyledons</taxon>
        <taxon>Gunneridae</taxon>
        <taxon>Pentapetalae</taxon>
        <taxon>rosids</taxon>
        <taxon>malvids</taxon>
        <taxon>Brassicales</taxon>
        <taxon>Brassicaceae</taxon>
        <taxon>Camelineae</taxon>
        <taxon>Arabidopsis</taxon>
    </lineage>
</organism>
<proteinExistence type="evidence at protein level"/>
<sequence>MQGTLSVWLAKRGLVHRSLGFDYQGIETLQIKPEDWHSIAVILYVYGYNYLRSQCAYDVAPGGLLASVYHLTRIEYGVNQAEEVCIKVFTHRSNPRIPSVFWVWKSTDFQERESYDMLGITYDSHPRLKRILMPESWIGWPLRKDYIAPNFYEIQDAY</sequence>
<gene>
    <name evidence="1" type="primary">ndhJ</name>
    <name type="ordered locus">AtCg00420</name>
</gene>
<dbReference type="EC" id="7.1.1.-" evidence="1"/>
<dbReference type="EMBL" id="AP000423">
    <property type="protein sequence ID" value="BAA84388.1"/>
    <property type="molecule type" value="Genomic_DNA"/>
</dbReference>
<dbReference type="RefSeq" id="NP_051062.1">
    <property type="nucleotide sequence ID" value="NC_000932.1"/>
</dbReference>
<dbReference type="PDB" id="7WFG">
    <property type="method" value="EM"/>
    <property type="resolution" value="4.33 A"/>
    <property type="chains" value="J=1-158"/>
</dbReference>
<dbReference type="PDB" id="7WG5">
    <property type="method" value="EM"/>
    <property type="resolution" value="3.89 A"/>
    <property type="chains" value="J=1-158"/>
</dbReference>
<dbReference type="PDBsum" id="7WFG"/>
<dbReference type="PDBsum" id="7WG5"/>
<dbReference type="EMDB" id="EMD-32465"/>
<dbReference type="EMDB" id="EMD-32477"/>
<dbReference type="SMR" id="P56754"/>
<dbReference type="BioGRID" id="29965">
    <property type="interactions" value="3"/>
</dbReference>
<dbReference type="FunCoup" id="P56754">
    <property type="interactions" value="34"/>
</dbReference>
<dbReference type="STRING" id="3702.P56754"/>
<dbReference type="TCDB" id="3.D.1.8.1">
    <property type="family name" value="the h+ or na+-translocating nadh dehydrogenase (ndh) family"/>
</dbReference>
<dbReference type="PaxDb" id="3702-ATCG00420.1"/>
<dbReference type="ProteomicsDB" id="250999"/>
<dbReference type="EnsemblPlants" id="ATCG00420.1">
    <property type="protein sequence ID" value="ATCG00420.1"/>
    <property type="gene ID" value="ATCG00420"/>
</dbReference>
<dbReference type="GeneID" id="844763"/>
<dbReference type="Gramene" id="ATCG00420.1">
    <property type="protein sequence ID" value="ATCG00420.1"/>
    <property type="gene ID" value="ATCG00420"/>
</dbReference>
<dbReference type="KEGG" id="ath:ArthCp025"/>
<dbReference type="Araport" id="ATCG00420"/>
<dbReference type="TAIR" id="ATCG00420">
    <property type="gene designation" value="NDHJ"/>
</dbReference>
<dbReference type="eggNOG" id="KOG1713">
    <property type="taxonomic scope" value="Eukaryota"/>
</dbReference>
<dbReference type="HOGENOM" id="CLU_042628_9_1_1"/>
<dbReference type="InParanoid" id="P56754"/>
<dbReference type="OMA" id="NYLQCQG"/>
<dbReference type="BioCyc" id="ARA:ATCG00420-MONOMER"/>
<dbReference type="PRO" id="PR:P56754"/>
<dbReference type="Proteomes" id="UP000006548">
    <property type="component" value="Chloroplast Pltd"/>
</dbReference>
<dbReference type="ExpressionAtlas" id="P56754">
    <property type="expression patterns" value="baseline and differential"/>
</dbReference>
<dbReference type="GO" id="GO:0009507">
    <property type="term" value="C:chloroplast"/>
    <property type="evidence" value="ECO:0007005"/>
    <property type="project" value="TAIR"/>
</dbReference>
<dbReference type="GO" id="GO:0009535">
    <property type="term" value="C:chloroplast thylakoid membrane"/>
    <property type="evidence" value="ECO:0007669"/>
    <property type="project" value="UniProtKB-SubCell"/>
</dbReference>
<dbReference type="GO" id="GO:0008137">
    <property type="term" value="F:NADH dehydrogenase (ubiquinone) activity"/>
    <property type="evidence" value="ECO:0007669"/>
    <property type="project" value="InterPro"/>
</dbReference>
<dbReference type="GO" id="GO:0048038">
    <property type="term" value="F:quinone binding"/>
    <property type="evidence" value="ECO:0007669"/>
    <property type="project" value="UniProtKB-KW"/>
</dbReference>
<dbReference type="GO" id="GO:0009970">
    <property type="term" value="P:cellular response to sulfate starvation"/>
    <property type="evidence" value="ECO:0000270"/>
    <property type="project" value="TAIR"/>
</dbReference>
<dbReference type="GO" id="GO:0019684">
    <property type="term" value="P:photosynthesis, light reaction"/>
    <property type="evidence" value="ECO:0007669"/>
    <property type="project" value="UniProtKB-UniRule"/>
</dbReference>
<dbReference type="FunFam" id="3.30.460.80:FF:000004">
    <property type="entry name" value="NAD(P)H-quinone oxidoreductase subunit J, chloroplastic"/>
    <property type="match status" value="1"/>
</dbReference>
<dbReference type="Gene3D" id="3.30.460.80">
    <property type="entry name" value="NADH:ubiquinone oxidoreductase, 30kDa subunit"/>
    <property type="match status" value="1"/>
</dbReference>
<dbReference type="HAMAP" id="MF_01357">
    <property type="entry name" value="NDH1_NuoC"/>
    <property type="match status" value="1"/>
</dbReference>
<dbReference type="InterPro" id="IPR010218">
    <property type="entry name" value="NADH_DH_suC"/>
</dbReference>
<dbReference type="InterPro" id="IPR037232">
    <property type="entry name" value="NADH_quin_OxRdtase_su_C/D-like"/>
</dbReference>
<dbReference type="InterPro" id="IPR001268">
    <property type="entry name" value="NADH_UbQ_OxRdtase_30kDa_su"/>
</dbReference>
<dbReference type="InterPro" id="IPR020396">
    <property type="entry name" value="NADH_UbQ_OxRdtase_CS"/>
</dbReference>
<dbReference type="NCBIfam" id="NF009141">
    <property type="entry name" value="PRK12494.1"/>
    <property type="match status" value="1"/>
</dbReference>
<dbReference type="PANTHER" id="PTHR10884:SF14">
    <property type="entry name" value="NADH DEHYDROGENASE [UBIQUINONE] IRON-SULFUR PROTEIN 3, MITOCHONDRIAL"/>
    <property type="match status" value="1"/>
</dbReference>
<dbReference type="PANTHER" id="PTHR10884">
    <property type="entry name" value="NADH DEHYDROGENASE UBIQUINONE IRON-SULFUR PROTEIN 3"/>
    <property type="match status" value="1"/>
</dbReference>
<dbReference type="Pfam" id="PF00329">
    <property type="entry name" value="Complex1_30kDa"/>
    <property type="match status" value="1"/>
</dbReference>
<dbReference type="SUPFAM" id="SSF143243">
    <property type="entry name" value="Nqo5-like"/>
    <property type="match status" value="1"/>
</dbReference>
<dbReference type="PROSITE" id="PS00542">
    <property type="entry name" value="COMPLEX1_30K"/>
    <property type="match status" value="1"/>
</dbReference>
<accession>P56754</accession>
<protein>
    <recommendedName>
        <fullName evidence="1">NAD(P)H-quinone oxidoreductase subunit J, chloroplastic</fullName>
        <ecNumber evidence="1">7.1.1.-</ecNumber>
    </recommendedName>
    <alternativeName>
        <fullName>NAD(P)H dehydrogenase subunit J</fullName>
    </alternativeName>
    <alternativeName>
        <fullName evidence="1">NADH-plastoquinone oxidoreductase subunit J</fullName>
    </alternativeName>
</protein>
<comment type="function">
    <text evidence="1">NDH shuttles electrons from NAD(P)H:plastoquinone, via FMN and iron-sulfur (Fe-S) centers, to quinones in the photosynthetic chain and possibly in a chloroplast respiratory chain. The immediate electron acceptor for the enzyme in this species is believed to be plastoquinone. Couples the redox reaction to proton translocation, and thus conserves the redox energy in a proton gradient.</text>
</comment>
<comment type="catalytic activity">
    <reaction evidence="1">
        <text>a plastoquinone + NADH + (n+1) H(+)(in) = a plastoquinol + NAD(+) + n H(+)(out)</text>
        <dbReference type="Rhea" id="RHEA:42608"/>
        <dbReference type="Rhea" id="RHEA-COMP:9561"/>
        <dbReference type="Rhea" id="RHEA-COMP:9562"/>
        <dbReference type="ChEBI" id="CHEBI:15378"/>
        <dbReference type="ChEBI" id="CHEBI:17757"/>
        <dbReference type="ChEBI" id="CHEBI:57540"/>
        <dbReference type="ChEBI" id="CHEBI:57945"/>
        <dbReference type="ChEBI" id="CHEBI:62192"/>
    </reaction>
</comment>
<comment type="catalytic activity">
    <reaction evidence="1">
        <text>a plastoquinone + NADPH + (n+1) H(+)(in) = a plastoquinol + NADP(+) + n H(+)(out)</text>
        <dbReference type="Rhea" id="RHEA:42612"/>
        <dbReference type="Rhea" id="RHEA-COMP:9561"/>
        <dbReference type="Rhea" id="RHEA-COMP:9562"/>
        <dbReference type="ChEBI" id="CHEBI:15378"/>
        <dbReference type="ChEBI" id="CHEBI:17757"/>
        <dbReference type="ChEBI" id="CHEBI:57783"/>
        <dbReference type="ChEBI" id="CHEBI:58349"/>
        <dbReference type="ChEBI" id="CHEBI:62192"/>
    </reaction>
</comment>
<comment type="subunit">
    <text evidence="1">NDH is composed of at least 16 different subunits, 5 of which are encoded in the nucleus.</text>
</comment>
<comment type="subcellular location">
    <subcellularLocation>
        <location evidence="1">Plastid</location>
        <location evidence="1">Chloroplast thylakoid membrane</location>
        <topology evidence="1">Peripheral membrane protein</topology>
        <orientation evidence="1">Stromal side</orientation>
    </subcellularLocation>
</comment>
<comment type="similarity">
    <text evidence="1">Belongs to the complex I 30 kDa subunit family.</text>
</comment>